<organism>
    <name type="scientific">Pseudomonas fluorescens (strain Pf0-1)</name>
    <dbReference type="NCBI Taxonomy" id="205922"/>
    <lineage>
        <taxon>Bacteria</taxon>
        <taxon>Pseudomonadati</taxon>
        <taxon>Pseudomonadota</taxon>
        <taxon>Gammaproteobacteria</taxon>
        <taxon>Pseudomonadales</taxon>
        <taxon>Pseudomonadaceae</taxon>
        <taxon>Pseudomonas</taxon>
    </lineage>
</organism>
<reference key="1">
    <citation type="journal article" date="2009" name="Genome Biol.">
        <title>Genomic and genetic analyses of diversity and plant interactions of Pseudomonas fluorescens.</title>
        <authorList>
            <person name="Silby M.W."/>
            <person name="Cerdeno-Tarraga A.M."/>
            <person name="Vernikos G.S."/>
            <person name="Giddens S.R."/>
            <person name="Jackson R.W."/>
            <person name="Preston G.M."/>
            <person name="Zhang X.-X."/>
            <person name="Moon C.D."/>
            <person name="Gehrig S.M."/>
            <person name="Godfrey S.A.C."/>
            <person name="Knight C.G."/>
            <person name="Malone J.G."/>
            <person name="Robinson Z."/>
            <person name="Spiers A.J."/>
            <person name="Harris S."/>
            <person name="Challis G.L."/>
            <person name="Yaxley A.M."/>
            <person name="Harris D."/>
            <person name="Seeger K."/>
            <person name="Murphy L."/>
            <person name="Rutter S."/>
            <person name="Squares R."/>
            <person name="Quail M.A."/>
            <person name="Saunders E."/>
            <person name="Mavromatis K."/>
            <person name="Brettin T.S."/>
            <person name="Bentley S.D."/>
            <person name="Hothersall J."/>
            <person name="Stephens E."/>
            <person name="Thomas C.M."/>
            <person name="Parkhill J."/>
            <person name="Levy S.B."/>
            <person name="Rainey P.B."/>
            <person name="Thomson N.R."/>
        </authorList>
    </citation>
    <scope>NUCLEOTIDE SEQUENCE [LARGE SCALE GENOMIC DNA]</scope>
    <source>
        <strain>Pf0-1</strain>
    </source>
</reference>
<comment type="catalytic activity">
    <reaction evidence="1">
        <text>L-glutamate + acetyl-CoA = N-acetyl-L-glutamate + CoA + H(+)</text>
        <dbReference type="Rhea" id="RHEA:24292"/>
        <dbReference type="ChEBI" id="CHEBI:15378"/>
        <dbReference type="ChEBI" id="CHEBI:29985"/>
        <dbReference type="ChEBI" id="CHEBI:44337"/>
        <dbReference type="ChEBI" id="CHEBI:57287"/>
        <dbReference type="ChEBI" id="CHEBI:57288"/>
        <dbReference type="EC" id="2.3.1.1"/>
    </reaction>
</comment>
<comment type="pathway">
    <text evidence="1">Amino-acid biosynthesis; L-arginine biosynthesis; N(2)-acetyl-L-ornithine from L-glutamate: step 1/4.</text>
</comment>
<comment type="subcellular location">
    <subcellularLocation>
        <location evidence="1">Cytoplasm</location>
    </subcellularLocation>
</comment>
<comment type="similarity">
    <text evidence="1">Belongs to the acetyltransferase family. ArgA subfamily.</text>
</comment>
<gene>
    <name evidence="1" type="primary">argA</name>
    <name type="ordered locus">Pfl01_5419</name>
</gene>
<name>ARGA_PSEPF</name>
<proteinExistence type="inferred from homology"/>
<protein>
    <recommendedName>
        <fullName evidence="1">Amino-acid acetyltransferase</fullName>
        <ecNumber evidence="1">2.3.1.1</ecNumber>
    </recommendedName>
    <alternativeName>
        <fullName evidence="1">N-acetylglutamate synthase</fullName>
        <shortName evidence="1">AGS</shortName>
        <shortName evidence="1">NAGS</shortName>
    </alternativeName>
</protein>
<evidence type="ECO:0000255" key="1">
    <source>
        <dbReference type="HAMAP-Rule" id="MF_01105"/>
    </source>
</evidence>
<dbReference type="EC" id="2.3.1.1" evidence="1"/>
<dbReference type="EMBL" id="CP000094">
    <property type="protein sequence ID" value="ABA77156.1"/>
    <property type="molecule type" value="Genomic_DNA"/>
</dbReference>
<dbReference type="RefSeq" id="WP_007951778.1">
    <property type="nucleotide sequence ID" value="NC_007492.2"/>
</dbReference>
<dbReference type="SMR" id="Q3K4Z8"/>
<dbReference type="KEGG" id="pfo:Pfl01_5419"/>
<dbReference type="eggNOG" id="COG0548">
    <property type="taxonomic scope" value="Bacteria"/>
</dbReference>
<dbReference type="eggNOG" id="COG1246">
    <property type="taxonomic scope" value="Bacteria"/>
</dbReference>
<dbReference type="HOGENOM" id="CLU_024773_0_0_6"/>
<dbReference type="UniPathway" id="UPA00068">
    <property type="reaction ID" value="UER00106"/>
</dbReference>
<dbReference type="Proteomes" id="UP000002704">
    <property type="component" value="Chromosome"/>
</dbReference>
<dbReference type="GO" id="GO:0005737">
    <property type="term" value="C:cytoplasm"/>
    <property type="evidence" value="ECO:0007669"/>
    <property type="project" value="UniProtKB-SubCell"/>
</dbReference>
<dbReference type="GO" id="GO:0004042">
    <property type="term" value="F:L-glutamate N-acetyltransferase activity"/>
    <property type="evidence" value="ECO:0007669"/>
    <property type="project" value="UniProtKB-UniRule"/>
</dbReference>
<dbReference type="GO" id="GO:0006526">
    <property type="term" value="P:L-arginine biosynthetic process"/>
    <property type="evidence" value="ECO:0007669"/>
    <property type="project" value="UniProtKB-UniRule"/>
</dbReference>
<dbReference type="CDD" id="cd04237">
    <property type="entry name" value="AAK_NAGS-ABP"/>
    <property type="match status" value="1"/>
</dbReference>
<dbReference type="CDD" id="cd04301">
    <property type="entry name" value="NAT_SF"/>
    <property type="match status" value="1"/>
</dbReference>
<dbReference type="Gene3D" id="3.40.630.30">
    <property type="match status" value="1"/>
</dbReference>
<dbReference type="Gene3D" id="3.40.1160.10">
    <property type="entry name" value="Acetylglutamate kinase-like"/>
    <property type="match status" value="1"/>
</dbReference>
<dbReference type="HAMAP" id="MF_01105">
    <property type="entry name" value="N_acetyl_glu_synth"/>
    <property type="match status" value="1"/>
</dbReference>
<dbReference type="InterPro" id="IPR036393">
    <property type="entry name" value="AceGlu_kinase-like_sf"/>
</dbReference>
<dbReference type="InterPro" id="IPR016181">
    <property type="entry name" value="Acyl_CoA_acyltransferase"/>
</dbReference>
<dbReference type="InterPro" id="IPR001048">
    <property type="entry name" value="Asp/Glu/Uridylate_kinase"/>
</dbReference>
<dbReference type="InterPro" id="IPR000182">
    <property type="entry name" value="GNAT_dom"/>
</dbReference>
<dbReference type="InterPro" id="IPR033719">
    <property type="entry name" value="NAGS_kin"/>
</dbReference>
<dbReference type="InterPro" id="IPR010167">
    <property type="entry name" value="NH2A_AcTrfase"/>
</dbReference>
<dbReference type="NCBIfam" id="TIGR01890">
    <property type="entry name" value="N-Ac-Glu-synth"/>
    <property type="match status" value="1"/>
</dbReference>
<dbReference type="NCBIfam" id="NF003641">
    <property type="entry name" value="PRK05279.1"/>
    <property type="match status" value="1"/>
</dbReference>
<dbReference type="PANTHER" id="PTHR30602">
    <property type="entry name" value="AMINO-ACID ACETYLTRANSFERASE"/>
    <property type="match status" value="1"/>
</dbReference>
<dbReference type="PANTHER" id="PTHR30602:SF12">
    <property type="entry name" value="AMINO-ACID ACETYLTRANSFERASE NAGS1, CHLOROPLASTIC-RELATED"/>
    <property type="match status" value="1"/>
</dbReference>
<dbReference type="Pfam" id="PF00696">
    <property type="entry name" value="AA_kinase"/>
    <property type="match status" value="1"/>
</dbReference>
<dbReference type="Pfam" id="PF13508">
    <property type="entry name" value="Acetyltransf_7"/>
    <property type="match status" value="1"/>
</dbReference>
<dbReference type="PIRSF" id="PIRSF000423">
    <property type="entry name" value="ArgA"/>
    <property type="match status" value="1"/>
</dbReference>
<dbReference type="SUPFAM" id="SSF55729">
    <property type="entry name" value="Acyl-CoA N-acyltransferases (Nat)"/>
    <property type="match status" value="1"/>
</dbReference>
<dbReference type="SUPFAM" id="SSF53633">
    <property type="entry name" value="Carbamate kinase-like"/>
    <property type="match status" value="1"/>
</dbReference>
<dbReference type="PROSITE" id="PS51186">
    <property type="entry name" value="GNAT"/>
    <property type="match status" value="1"/>
</dbReference>
<sequence length="432" mass="47697">MPEYVNWLRHASPYINAHRDCTFVVMLPGDGVEHPNFGNIVHDIVLLHSLGVRLVLVHGSRPQIETRLAARGLTPHYHHGMRITDAATLECVIDAVGQLRIAIEARLSMDMASSPMQGSRLRVASGNLVTARPIGVLEGVDYHHTGEVRRVDRKGINRLLDERSIVLLSPLGYSPTGEIFNLACEDVATRAAIDLGADKLLLFGADLGLIDENGKLVRELRPQQVPAHLQRLGSNYQAELLDAAAEACRGGVARSHIVSYAEDGALLTELFTRDGGGTLVAQEQFELVREAAIEDVGGLLDLISPLEEQGILVRRSREVLEREIEQFSVVEREGMIIACAALYQIADSDAGELACLAVNPEYRHGGRGDELLERIETRARAQGLKTLFVLTTRTAHWFRERGFEPSSVERLPAARASLYNYQRNSKIFEKSL</sequence>
<keyword id="KW-0012">Acyltransferase</keyword>
<keyword id="KW-0028">Amino-acid biosynthesis</keyword>
<keyword id="KW-0055">Arginine biosynthesis</keyword>
<keyword id="KW-0963">Cytoplasm</keyword>
<keyword id="KW-0808">Transferase</keyword>
<feature type="chain" id="PRO_1000084819" description="Amino-acid acetyltransferase">
    <location>
        <begin position="1"/>
        <end position="432"/>
    </location>
</feature>
<feature type="domain" description="N-acetyltransferase" evidence="1">
    <location>
        <begin position="286"/>
        <end position="425"/>
    </location>
</feature>
<accession>Q3K4Z8</accession>